<protein>
    <recommendedName>
        <fullName>Peroxisomal biogenesis factor 3</fullName>
    </recommendedName>
    <alternativeName>
        <fullName evidence="5">Peroxin-3</fullName>
    </alternativeName>
</protein>
<gene>
    <name type="primary">PEX3</name>
    <name evidence="5" type="synonym">PAS3</name>
    <name type="ordered locus">YDR329C</name>
    <name type="ORF">D9798.15</name>
</gene>
<feature type="chain" id="PRO_0000208747" description="Peroxisomal biogenesis factor 3">
    <location>
        <begin position="1"/>
        <end position="441"/>
    </location>
</feature>
<feature type="topological domain" description="Peroxisomal" evidence="1">
    <location>
        <begin position="1"/>
        <end position="17"/>
    </location>
</feature>
<feature type="transmembrane region" description="Helical" evidence="1">
    <location>
        <begin position="18"/>
        <end position="39"/>
    </location>
</feature>
<feature type="topological domain" description="Cytoplasmic" evidence="1">
    <location>
        <begin position="40"/>
        <end position="441"/>
    </location>
</feature>
<proteinExistence type="evidence at protein level"/>
<organism>
    <name type="scientific">Saccharomyces cerevisiae (strain ATCC 204508 / S288c)</name>
    <name type="common">Baker's yeast</name>
    <dbReference type="NCBI Taxonomy" id="559292"/>
    <lineage>
        <taxon>Eukaryota</taxon>
        <taxon>Fungi</taxon>
        <taxon>Dikarya</taxon>
        <taxon>Ascomycota</taxon>
        <taxon>Saccharomycotina</taxon>
        <taxon>Saccharomycetes</taxon>
        <taxon>Saccharomycetales</taxon>
        <taxon>Saccharomycetaceae</taxon>
        <taxon>Saccharomyces</taxon>
    </lineage>
</organism>
<comment type="function">
    <text evidence="3 4">Involved in peroxisome biosynthesis (PubMed:1894692). Acts as a regulator of MSP1 by inhibiting the ability of MSP1 to unfold target proteins (PubMed:32541053).</text>
</comment>
<comment type="subunit">
    <text evidence="4">Interacts with MSP1; leading to inhibit the translocase activity of MSP1.</text>
</comment>
<comment type="interaction">
    <interactant intactId="EBI-13164">
        <id>P28795</id>
    </interactant>
    <interactant intactId="EBI-27445">
        <id>Q03694</id>
        <label>INP1</label>
    </interactant>
    <organismsDiffer>false</organismsDiffer>
    <experiments>6</experiments>
</comment>
<comment type="subcellular location">
    <subcellularLocation>
        <location evidence="3">Peroxisome membrane</location>
        <topology>Single-pass membrane protein</topology>
    </subcellularLocation>
</comment>
<comment type="induction">
    <text evidence="3">By oleic acid.</text>
</comment>
<comment type="disruption phenotype">
    <text evidence="3">Lack of this protein causes the peroxisomal-deficient phenotype and mislocalization in the cytosol of peroxisomal matrix proteins.</text>
</comment>
<comment type="miscellaneous">
    <text evidence="2">Present with 1400 molecules/cell in log phase SD medium.</text>
</comment>
<comment type="similarity">
    <text evidence="6">Belongs to the peroxin-3 family.</text>
</comment>
<reference key="1">
    <citation type="journal article" date="1991" name="J. Cell Biol.">
        <title>PAS3, a Saccharomyces cerevisiae gene encoding a peroxisomal integral membrane protein essential for peroxisome biogenesis.</title>
        <authorList>
            <person name="Hoehfeld J."/>
            <person name="Veenhuis M."/>
            <person name="Kunau W.-H."/>
        </authorList>
    </citation>
    <scope>NUCLEOTIDE SEQUENCE [GENOMIC DNA]</scope>
    <scope>FUNCTION</scope>
    <scope>SUBCELLULAR LOCATION</scope>
    <scope>DISRUPTION PHENOTYPE</scope>
</reference>
<reference key="2">
    <citation type="journal article" date="1997" name="Nature">
        <title>The nucleotide sequence of Saccharomyces cerevisiae chromosome IV.</title>
        <authorList>
            <person name="Jacq C."/>
            <person name="Alt-Moerbe J."/>
            <person name="Andre B."/>
            <person name="Arnold W."/>
            <person name="Bahr A."/>
            <person name="Ballesta J.P.G."/>
            <person name="Bargues M."/>
            <person name="Baron L."/>
            <person name="Becker A."/>
            <person name="Biteau N."/>
            <person name="Bloecker H."/>
            <person name="Blugeon C."/>
            <person name="Boskovic J."/>
            <person name="Brandt P."/>
            <person name="Brueckner M."/>
            <person name="Buitrago M.J."/>
            <person name="Coster F."/>
            <person name="Delaveau T."/>
            <person name="del Rey F."/>
            <person name="Dujon B."/>
            <person name="Eide L.G."/>
            <person name="Garcia-Cantalejo J.M."/>
            <person name="Goffeau A."/>
            <person name="Gomez-Peris A."/>
            <person name="Granotier C."/>
            <person name="Hanemann V."/>
            <person name="Hankeln T."/>
            <person name="Hoheisel J.D."/>
            <person name="Jaeger W."/>
            <person name="Jimenez A."/>
            <person name="Jonniaux J.-L."/>
            <person name="Kraemer C."/>
            <person name="Kuester H."/>
            <person name="Laamanen P."/>
            <person name="Legros Y."/>
            <person name="Louis E.J."/>
            <person name="Moeller-Rieker S."/>
            <person name="Monnet A."/>
            <person name="Moro M."/>
            <person name="Mueller-Auer S."/>
            <person name="Nussbaumer B."/>
            <person name="Paricio N."/>
            <person name="Paulin L."/>
            <person name="Perea J."/>
            <person name="Perez-Alonso M."/>
            <person name="Perez-Ortin J.E."/>
            <person name="Pohl T.M."/>
            <person name="Prydz H."/>
            <person name="Purnelle B."/>
            <person name="Rasmussen S.W."/>
            <person name="Remacha M.A."/>
            <person name="Revuelta J.L."/>
            <person name="Rieger M."/>
            <person name="Salom D."/>
            <person name="Saluz H.P."/>
            <person name="Saiz J.E."/>
            <person name="Saren A.-M."/>
            <person name="Schaefer M."/>
            <person name="Scharfe M."/>
            <person name="Schmidt E.R."/>
            <person name="Schneider C."/>
            <person name="Scholler P."/>
            <person name="Schwarz S."/>
            <person name="Soler-Mira A."/>
            <person name="Urrestarazu L.A."/>
            <person name="Verhasselt P."/>
            <person name="Vissers S."/>
            <person name="Voet M."/>
            <person name="Volckaert G."/>
            <person name="Wagner G."/>
            <person name="Wambutt R."/>
            <person name="Wedler E."/>
            <person name="Wedler H."/>
            <person name="Woelfl S."/>
            <person name="Harris D.E."/>
            <person name="Bowman S."/>
            <person name="Brown D."/>
            <person name="Churcher C.M."/>
            <person name="Connor R."/>
            <person name="Dedman K."/>
            <person name="Gentles S."/>
            <person name="Hamlin N."/>
            <person name="Hunt S."/>
            <person name="Jones L."/>
            <person name="McDonald S."/>
            <person name="Murphy L.D."/>
            <person name="Niblett D."/>
            <person name="Odell C."/>
            <person name="Oliver K."/>
            <person name="Rajandream M.A."/>
            <person name="Richards C."/>
            <person name="Shore L."/>
            <person name="Walsh S.V."/>
            <person name="Barrell B.G."/>
            <person name="Dietrich F.S."/>
            <person name="Mulligan J.T."/>
            <person name="Allen E."/>
            <person name="Araujo R."/>
            <person name="Aviles E."/>
            <person name="Berno A."/>
            <person name="Carpenter J."/>
            <person name="Chen E."/>
            <person name="Cherry J.M."/>
            <person name="Chung E."/>
            <person name="Duncan M."/>
            <person name="Hunicke-Smith S."/>
            <person name="Hyman R.W."/>
            <person name="Komp C."/>
            <person name="Lashkari D."/>
            <person name="Lew H."/>
            <person name="Lin D."/>
            <person name="Mosedale D."/>
            <person name="Nakahara K."/>
            <person name="Namath A."/>
            <person name="Oefner P."/>
            <person name="Oh C."/>
            <person name="Petel F.X."/>
            <person name="Roberts D."/>
            <person name="Schramm S."/>
            <person name="Schroeder M."/>
            <person name="Shogren T."/>
            <person name="Shroff N."/>
            <person name="Winant A."/>
            <person name="Yelton M.A."/>
            <person name="Botstein D."/>
            <person name="Davis R.W."/>
            <person name="Johnston M."/>
            <person name="Andrews S."/>
            <person name="Brinkman R."/>
            <person name="Cooper J."/>
            <person name="Ding H."/>
            <person name="Du Z."/>
            <person name="Favello A."/>
            <person name="Fulton L."/>
            <person name="Gattung S."/>
            <person name="Greco T."/>
            <person name="Hallsworth K."/>
            <person name="Hawkins J."/>
            <person name="Hillier L.W."/>
            <person name="Jier M."/>
            <person name="Johnson D."/>
            <person name="Johnston L."/>
            <person name="Kirsten J."/>
            <person name="Kucaba T."/>
            <person name="Langston Y."/>
            <person name="Latreille P."/>
            <person name="Le T."/>
            <person name="Mardis E."/>
            <person name="Menezes S."/>
            <person name="Miller N."/>
            <person name="Nhan M."/>
            <person name="Pauley A."/>
            <person name="Peluso D."/>
            <person name="Rifkin L."/>
            <person name="Riles L."/>
            <person name="Taich A."/>
            <person name="Trevaskis E."/>
            <person name="Vignati D."/>
            <person name="Wilcox L."/>
            <person name="Wohldman P."/>
            <person name="Vaudin M."/>
            <person name="Wilson R."/>
            <person name="Waterston R."/>
            <person name="Albermann K."/>
            <person name="Hani J."/>
            <person name="Heumann K."/>
            <person name="Kleine K."/>
            <person name="Mewes H.-W."/>
            <person name="Zollner A."/>
            <person name="Zaccaria P."/>
        </authorList>
    </citation>
    <scope>NUCLEOTIDE SEQUENCE [LARGE SCALE GENOMIC DNA]</scope>
    <source>
        <strain>ATCC 204508 / S288c</strain>
    </source>
</reference>
<reference key="3">
    <citation type="journal article" date="2014" name="G3 (Bethesda)">
        <title>The reference genome sequence of Saccharomyces cerevisiae: Then and now.</title>
        <authorList>
            <person name="Engel S.R."/>
            <person name="Dietrich F.S."/>
            <person name="Fisk D.G."/>
            <person name="Binkley G."/>
            <person name="Balakrishnan R."/>
            <person name="Costanzo M.C."/>
            <person name="Dwight S.S."/>
            <person name="Hitz B.C."/>
            <person name="Karra K."/>
            <person name="Nash R.S."/>
            <person name="Weng S."/>
            <person name="Wong E.D."/>
            <person name="Lloyd P."/>
            <person name="Skrzypek M.S."/>
            <person name="Miyasato S.R."/>
            <person name="Simison M."/>
            <person name="Cherry J.M."/>
        </authorList>
    </citation>
    <scope>GENOME REANNOTATION</scope>
    <source>
        <strain>ATCC 204508 / S288c</strain>
    </source>
</reference>
<reference key="4">
    <citation type="journal article" date="2003" name="Nature">
        <title>Global analysis of protein expression in yeast.</title>
        <authorList>
            <person name="Ghaemmaghami S."/>
            <person name="Huh W.-K."/>
            <person name="Bower K."/>
            <person name="Howson R.W."/>
            <person name="Belle A."/>
            <person name="Dephoure N."/>
            <person name="O'Shea E.K."/>
            <person name="Weissman J.S."/>
        </authorList>
    </citation>
    <scope>LEVEL OF PROTEIN EXPRESSION [LARGE SCALE ANALYSIS]</scope>
</reference>
<reference key="5">
    <citation type="journal article" date="2020" name="Proc. Natl. Acad. Sci. U.S.A.">
        <title>The AAA+ ATPase Msp1 is a processive protein translocase with robust unfoldase activity.</title>
        <authorList>
            <person name="Castanzo D.T."/>
            <person name="LaFrance B."/>
            <person name="Martin A."/>
        </authorList>
    </citation>
    <scope>FUNCTION</scope>
    <scope>INTERACTION WITH MSP1</scope>
</reference>
<name>PEX3_YEAST</name>
<dbReference type="EMBL" id="X58407">
    <property type="protein sequence ID" value="CAA41309.1"/>
    <property type="molecule type" value="Genomic_DNA"/>
</dbReference>
<dbReference type="EMBL" id="U32517">
    <property type="protein sequence ID" value="AAB64764.1"/>
    <property type="molecule type" value="Genomic_DNA"/>
</dbReference>
<dbReference type="EMBL" id="BK006938">
    <property type="protein sequence ID" value="DAA12171.1"/>
    <property type="molecule type" value="Genomic_DNA"/>
</dbReference>
<dbReference type="PIR" id="A40550">
    <property type="entry name" value="A40550"/>
</dbReference>
<dbReference type="RefSeq" id="NP_010616.3">
    <property type="nucleotide sequence ID" value="NM_001180637.3"/>
</dbReference>
<dbReference type="SMR" id="P28795"/>
<dbReference type="BioGRID" id="32386">
    <property type="interactions" value="272"/>
</dbReference>
<dbReference type="DIP" id="DIP-2477N"/>
<dbReference type="FunCoup" id="P28795">
    <property type="interactions" value="236"/>
</dbReference>
<dbReference type="IntAct" id="P28795">
    <property type="interactions" value="8"/>
</dbReference>
<dbReference type="MINT" id="P28795"/>
<dbReference type="STRING" id="4932.YDR329C"/>
<dbReference type="TCDB" id="3.A.20.1.5">
    <property type="family name" value="the peroxisomal protein importer (ppi) family"/>
</dbReference>
<dbReference type="TCDB" id="9.A.17.1.1">
    <property type="family name" value="the integral membrane peroxisomal protein importer-2 (ppi2) family"/>
</dbReference>
<dbReference type="iPTMnet" id="P28795"/>
<dbReference type="PaxDb" id="4932-YDR329C"/>
<dbReference type="PeptideAtlas" id="P28795"/>
<dbReference type="EnsemblFungi" id="YDR329C_mRNA">
    <property type="protein sequence ID" value="YDR329C"/>
    <property type="gene ID" value="YDR329C"/>
</dbReference>
<dbReference type="GeneID" id="851929"/>
<dbReference type="KEGG" id="sce:YDR329C"/>
<dbReference type="AGR" id="SGD:S000002737"/>
<dbReference type="SGD" id="S000002737">
    <property type="gene designation" value="PEX3"/>
</dbReference>
<dbReference type="VEuPathDB" id="FungiDB:YDR329C"/>
<dbReference type="eggNOG" id="KOG4444">
    <property type="taxonomic scope" value="Eukaryota"/>
</dbReference>
<dbReference type="HOGENOM" id="CLU_017002_0_0_1"/>
<dbReference type="InParanoid" id="P28795"/>
<dbReference type="OMA" id="WLYKQQL"/>
<dbReference type="OrthoDB" id="45930at2759"/>
<dbReference type="BioCyc" id="YEAST:G3O-29885-MONOMER"/>
<dbReference type="Reactome" id="R-SCE-1369062">
    <property type="pathway name" value="ABC transporters in lipid homeostasis"/>
</dbReference>
<dbReference type="Reactome" id="R-SCE-9603798">
    <property type="pathway name" value="Class I peroxisomal membrane protein import"/>
</dbReference>
<dbReference type="BioGRID-ORCS" id="851929">
    <property type="hits" value="0 hits in 10 CRISPR screens"/>
</dbReference>
<dbReference type="PRO" id="PR:P28795"/>
<dbReference type="Proteomes" id="UP000002311">
    <property type="component" value="Chromosome IV"/>
</dbReference>
<dbReference type="RNAct" id="P28795">
    <property type="molecule type" value="protein"/>
</dbReference>
<dbReference type="GO" id="GO:0005783">
    <property type="term" value="C:endoplasmic reticulum"/>
    <property type="evidence" value="ECO:0000314"/>
    <property type="project" value="SGD"/>
</dbReference>
<dbReference type="GO" id="GO:0005778">
    <property type="term" value="C:peroxisomal membrane"/>
    <property type="evidence" value="ECO:0000314"/>
    <property type="project" value="SGD"/>
</dbReference>
<dbReference type="GO" id="GO:0005777">
    <property type="term" value="C:peroxisome"/>
    <property type="evidence" value="ECO:0000314"/>
    <property type="project" value="SGD"/>
</dbReference>
<dbReference type="GO" id="GO:0030674">
    <property type="term" value="F:protein-macromolecule adaptor activity"/>
    <property type="evidence" value="ECO:0000315"/>
    <property type="project" value="SGD"/>
</dbReference>
<dbReference type="GO" id="GO:0032581">
    <property type="term" value="P:ER-dependent peroxisome organization"/>
    <property type="evidence" value="ECO:0000314"/>
    <property type="project" value="SGD"/>
</dbReference>
<dbReference type="GO" id="GO:0045033">
    <property type="term" value="P:peroxisome inheritance"/>
    <property type="evidence" value="ECO:0000315"/>
    <property type="project" value="SGD"/>
</dbReference>
<dbReference type="GO" id="GO:0045046">
    <property type="term" value="P:protein import into peroxisome membrane"/>
    <property type="evidence" value="ECO:0000315"/>
    <property type="project" value="SGD"/>
</dbReference>
<dbReference type="InterPro" id="IPR006966">
    <property type="entry name" value="Peroxin-3"/>
</dbReference>
<dbReference type="PANTHER" id="PTHR28080">
    <property type="entry name" value="PEROXISOMAL BIOGENESIS FACTOR 3"/>
    <property type="match status" value="1"/>
</dbReference>
<dbReference type="PANTHER" id="PTHR28080:SF1">
    <property type="entry name" value="PEROXISOMAL BIOGENESIS FACTOR 3"/>
    <property type="match status" value="1"/>
</dbReference>
<dbReference type="Pfam" id="PF04882">
    <property type="entry name" value="Peroxin-3"/>
    <property type="match status" value="2"/>
</dbReference>
<keyword id="KW-0472">Membrane</keyword>
<keyword id="KW-0576">Peroxisome</keyword>
<keyword id="KW-1185">Reference proteome</keyword>
<keyword id="KW-0812">Transmembrane</keyword>
<keyword id="KW-1133">Transmembrane helix</keyword>
<sequence>MAPNQRSRSLLQRHRGKVLISLTGIAALFTTGSVVVFFVKRWLYKQQLRITEQHFIKEQIKRRFEQTQEDSLYTIYELLPVWRMVLNENDLNLDSIVTQLKDQKNQLTRAKSSESRESSPLKSKAELWNELELKSLIKLVTVTYTVSSLILLTRLQLNILTRNEYLDSAIKLTMQQENCNKLQNRFYNWVTSWWSDPEDKADDAMVMAAKKSKKEGQEVYINEQAFLSLSWWILNKGWLSYNEIITNQIEIEFDGIHPRDTLTLEEFSSRLTNIFRNTNSQIFQQNNNNLTSILLPKDSSGQEFLLSQTLDADALTSFHSNTLVFNQLVNELTQCIESTATSIVLESLINESFHFIMNKVGIKTIAKKKPGQEDQQQYQMAVFAMSMKDCCQEMLQTTAGSSHSGSVNEYLATLDSVQPLDDLSASVYSNFGVSSSFSFKP</sequence>
<accession>P28795</accession>
<accession>D6VSW1</accession>
<evidence type="ECO:0000255" key="1"/>
<evidence type="ECO:0000269" key="2">
    <source>
    </source>
</evidence>
<evidence type="ECO:0000269" key="3">
    <source>
    </source>
</evidence>
<evidence type="ECO:0000269" key="4">
    <source>
    </source>
</evidence>
<evidence type="ECO:0000303" key="5">
    <source>
    </source>
</evidence>
<evidence type="ECO:0000305" key="6"/>